<dbReference type="EC" id="6.1.1.23" evidence="1"/>
<dbReference type="EMBL" id="CP000100">
    <property type="protein sequence ID" value="ABB57343.1"/>
    <property type="molecule type" value="Genomic_DNA"/>
</dbReference>
<dbReference type="RefSeq" id="WP_011377978.1">
    <property type="nucleotide sequence ID" value="NZ_JACJTX010000003.1"/>
</dbReference>
<dbReference type="SMR" id="Q31NM6"/>
<dbReference type="STRING" id="1140.Synpcc7942_1313"/>
<dbReference type="PaxDb" id="1140-Synpcc7942_1313"/>
<dbReference type="GeneID" id="72430174"/>
<dbReference type="KEGG" id="syf:Synpcc7942_1313"/>
<dbReference type="eggNOG" id="COG0173">
    <property type="taxonomic scope" value="Bacteria"/>
</dbReference>
<dbReference type="HOGENOM" id="CLU_014330_3_2_3"/>
<dbReference type="OrthoDB" id="9802326at2"/>
<dbReference type="BioCyc" id="SYNEL:SYNPCC7942_1313-MONOMER"/>
<dbReference type="Proteomes" id="UP000889800">
    <property type="component" value="Chromosome"/>
</dbReference>
<dbReference type="GO" id="GO:0005737">
    <property type="term" value="C:cytoplasm"/>
    <property type="evidence" value="ECO:0007669"/>
    <property type="project" value="UniProtKB-SubCell"/>
</dbReference>
<dbReference type="GO" id="GO:0004815">
    <property type="term" value="F:aspartate-tRNA ligase activity"/>
    <property type="evidence" value="ECO:0007669"/>
    <property type="project" value="UniProtKB-UniRule"/>
</dbReference>
<dbReference type="GO" id="GO:0050560">
    <property type="term" value="F:aspartate-tRNA(Asn) ligase activity"/>
    <property type="evidence" value="ECO:0007669"/>
    <property type="project" value="UniProtKB-EC"/>
</dbReference>
<dbReference type="GO" id="GO:0005524">
    <property type="term" value="F:ATP binding"/>
    <property type="evidence" value="ECO:0007669"/>
    <property type="project" value="UniProtKB-UniRule"/>
</dbReference>
<dbReference type="GO" id="GO:0003676">
    <property type="term" value="F:nucleic acid binding"/>
    <property type="evidence" value="ECO:0007669"/>
    <property type="project" value="InterPro"/>
</dbReference>
<dbReference type="GO" id="GO:0006422">
    <property type="term" value="P:aspartyl-tRNA aminoacylation"/>
    <property type="evidence" value="ECO:0007669"/>
    <property type="project" value="UniProtKB-UniRule"/>
</dbReference>
<dbReference type="CDD" id="cd00777">
    <property type="entry name" value="AspRS_core"/>
    <property type="match status" value="1"/>
</dbReference>
<dbReference type="CDD" id="cd04317">
    <property type="entry name" value="EcAspRS_like_N"/>
    <property type="match status" value="1"/>
</dbReference>
<dbReference type="Gene3D" id="3.30.930.10">
    <property type="entry name" value="Bira Bifunctional Protein, Domain 2"/>
    <property type="match status" value="1"/>
</dbReference>
<dbReference type="Gene3D" id="3.30.1360.30">
    <property type="entry name" value="GAD-like domain"/>
    <property type="match status" value="1"/>
</dbReference>
<dbReference type="Gene3D" id="2.40.50.140">
    <property type="entry name" value="Nucleic acid-binding proteins"/>
    <property type="match status" value="1"/>
</dbReference>
<dbReference type="HAMAP" id="MF_00044">
    <property type="entry name" value="Asp_tRNA_synth_type1"/>
    <property type="match status" value="1"/>
</dbReference>
<dbReference type="InterPro" id="IPR004364">
    <property type="entry name" value="Aa-tRNA-synt_II"/>
</dbReference>
<dbReference type="InterPro" id="IPR006195">
    <property type="entry name" value="aa-tRNA-synth_II"/>
</dbReference>
<dbReference type="InterPro" id="IPR045864">
    <property type="entry name" value="aa-tRNA-synth_II/BPL/LPL"/>
</dbReference>
<dbReference type="InterPro" id="IPR004524">
    <property type="entry name" value="Asp-tRNA-ligase_1"/>
</dbReference>
<dbReference type="InterPro" id="IPR047089">
    <property type="entry name" value="Asp-tRNA-ligase_1_N"/>
</dbReference>
<dbReference type="InterPro" id="IPR002312">
    <property type="entry name" value="Asp/Asn-tRNA-synth_IIb"/>
</dbReference>
<dbReference type="InterPro" id="IPR047090">
    <property type="entry name" value="AspRS_core"/>
</dbReference>
<dbReference type="InterPro" id="IPR004115">
    <property type="entry name" value="GAD-like_sf"/>
</dbReference>
<dbReference type="InterPro" id="IPR029351">
    <property type="entry name" value="GAD_dom"/>
</dbReference>
<dbReference type="InterPro" id="IPR012340">
    <property type="entry name" value="NA-bd_OB-fold"/>
</dbReference>
<dbReference type="InterPro" id="IPR004365">
    <property type="entry name" value="NA-bd_OB_tRNA"/>
</dbReference>
<dbReference type="NCBIfam" id="TIGR00459">
    <property type="entry name" value="aspS_bact"/>
    <property type="match status" value="1"/>
</dbReference>
<dbReference type="NCBIfam" id="NF001750">
    <property type="entry name" value="PRK00476.1"/>
    <property type="match status" value="1"/>
</dbReference>
<dbReference type="PANTHER" id="PTHR22594:SF5">
    <property type="entry name" value="ASPARTATE--TRNA LIGASE, MITOCHONDRIAL"/>
    <property type="match status" value="1"/>
</dbReference>
<dbReference type="PANTHER" id="PTHR22594">
    <property type="entry name" value="ASPARTYL/LYSYL-TRNA SYNTHETASE"/>
    <property type="match status" value="1"/>
</dbReference>
<dbReference type="Pfam" id="PF02938">
    <property type="entry name" value="GAD"/>
    <property type="match status" value="1"/>
</dbReference>
<dbReference type="Pfam" id="PF00152">
    <property type="entry name" value="tRNA-synt_2"/>
    <property type="match status" value="1"/>
</dbReference>
<dbReference type="Pfam" id="PF01336">
    <property type="entry name" value="tRNA_anti-codon"/>
    <property type="match status" value="1"/>
</dbReference>
<dbReference type="PRINTS" id="PR01042">
    <property type="entry name" value="TRNASYNTHASP"/>
</dbReference>
<dbReference type="SUPFAM" id="SSF55681">
    <property type="entry name" value="Class II aaRS and biotin synthetases"/>
    <property type="match status" value="1"/>
</dbReference>
<dbReference type="SUPFAM" id="SSF55261">
    <property type="entry name" value="GAD domain-like"/>
    <property type="match status" value="1"/>
</dbReference>
<dbReference type="SUPFAM" id="SSF50249">
    <property type="entry name" value="Nucleic acid-binding proteins"/>
    <property type="match status" value="1"/>
</dbReference>
<dbReference type="PROSITE" id="PS50862">
    <property type="entry name" value="AA_TRNA_LIGASE_II"/>
    <property type="match status" value="1"/>
</dbReference>
<accession>Q31NM6</accession>
<comment type="function">
    <text evidence="1">Aspartyl-tRNA synthetase with relaxed tRNA specificity since it is able to aspartylate not only its cognate tRNA(Asp) but also tRNA(Asn). Reaction proceeds in two steps: L-aspartate is first activated by ATP to form Asp-AMP and then transferred to the acceptor end of tRNA(Asp/Asn).</text>
</comment>
<comment type="catalytic activity">
    <reaction evidence="1">
        <text>tRNA(Asx) + L-aspartate + ATP = L-aspartyl-tRNA(Asx) + AMP + diphosphate</text>
        <dbReference type="Rhea" id="RHEA:18349"/>
        <dbReference type="Rhea" id="RHEA-COMP:9710"/>
        <dbReference type="Rhea" id="RHEA-COMP:9711"/>
        <dbReference type="ChEBI" id="CHEBI:29991"/>
        <dbReference type="ChEBI" id="CHEBI:30616"/>
        <dbReference type="ChEBI" id="CHEBI:33019"/>
        <dbReference type="ChEBI" id="CHEBI:78442"/>
        <dbReference type="ChEBI" id="CHEBI:78516"/>
        <dbReference type="ChEBI" id="CHEBI:456215"/>
        <dbReference type="EC" id="6.1.1.23"/>
    </reaction>
</comment>
<comment type="subunit">
    <text evidence="1">Homodimer.</text>
</comment>
<comment type="subcellular location">
    <subcellularLocation>
        <location evidence="1">Cytoplasm</location>
    </subcellularLocation>
</comment>
<comment type="similarity">
    <text evidence="1">Belongs to the class-II aminoacyl-tRNA synthetase family. Type 1 subfamily.</text>
</comment>
<keyword id="KW-0030">Aminoacyl-tRNA synthetase</keyword>
<keyword id="KW-0067">ATP-binding</keyword>
<keyword id="KW-0963">Cytoplasm</keyword>
<keyword id="KW-0436">Ligase</keyword>
<keyword id="KW-0547">Nucleotide-binding</keyword>
<keyword id="KW-0648">Protein biosynthesis</keyword>
<keyword id="KW-1185">Reference proteome</keyword>
<reference key="1">
    <citation type="submission" date="2005-08" db="EMBL/GenBank/DDBJ databases">
        <title>Complete sequence of chromosome 1 of Synechococcus elongatus PCC 7942.</title>
        <authorList>
            <consortium name="US DOE Joint Genome Institute"/>
            <person name="Copeland A."/>
            <person name="Lucas S."/>
            <person name="Lapidus A."/>
            <person name="Barry K."/>
            <person name="Detter J.C."/>
            <person name="Glavina T."/>
            <person name="Hammon N."/>
            <person name="Israni S."/>
            <person name="Pitluck S."/>
            <person name="Schmutz J."/>
            <person name="Larimer F."/>
            <person name="Land M."/>
            <person name="Kyrpides N."/>
            <person name="Lykidis A."/>
            <person name="Golden S."/>
            <person name="Richardson P."/>
        </authorList>
    </citation>
    <scope>NUCLEOTIDE SEQUENCE [LARGE SCALE GENOMIC DNA]</scope>
    <source>
        <strain>ATCC 33912 / PCC 7942 / FACHB-805</strain>
    </source>
</reference>
<name>SYDND_SYNE7</name>
<proteinExistence type="inferred from homology"/>
<protein>
    <recommendedName>
        <fullName evidence="1">Aspartate--tRNA(Asp/Asn) ligase</fullName>
        <ecNumber evidence="1">6.1.1.23</ecNumber>
    </recommendedName>
    <alternativeName>
        <fullName evidence="1">Aspartyl-tRNA synthetase</fullName>
        <shortName evidence="1">AspRS</shortName>
    </alternativeName>
    <alternativeName>
        <fullName evidence="1">Non-discriminating aspartyl-tRNA synthetase</fullName>
        <shortName evidence="1">ND-AspRS</shortName>
    </alternativeName>
</protein>
<sequence>MRTHYCGELRAEQVGTSVTLYGWVDRRRDHGGVIFVDLRDRTGTVQIVSDPERTPESYHQAEGLRNEYVVKITGRVSGRPAESLNPKLPTGEVEIYADRIEILNAVRRQLPFQVSSADEETVREDLRLRYRYLDLRRDRMNRNLQLRHQVVKAIRRFLEDEEQFIEIETPVLTKSTPEGARDYLVPSRVNPGEWFALPQSPQLFKQLLMVSGFDRYYQIARCFRDEDLRADRQPEFTQLDMEMSFLSQEEIIDLNERLIAHIFKTVKGIELPRPFPRLTYAEAMDRYGSDRPDTRFGLELVDVSDVVADMGFKVFSGAVKSGGKVKILPIPDGNDRISNVRIKPGGDIFKEATEAGAAGLAYIRVRENGEIDTIGAIKDNLSDEQKAEILRRTQAQPGTLLLFGAGSTDIVNKSLDRVRQFLGKELGLIDPEALNLLWVVDFPMVEWNADEKRYEALHHPFTAPNPQDLEDLTTARAQAYDIVLNGLEIGGGSLRIYQRDIQERVFETIGLSHEEAQAKFGFLLEAFDFGTPPHGGIAYGLDRLVMLLTGEESIRDAIAFPKTQQARCLLTEAPADVSDRQLKELYVASTWQPPIKERD</sequence>
<evidence type="ECO:0000255" key="1">
    <source>
        <dbReference type="HAMAP-Rule" id="MF_00044"/>
    </source>
</evidence>
<organism>
    <name type="scientific">Synechococcus elongatus (strain ATCC 33912 / PCC 7942 / FACHB-805)</name>
    <name type="common">Anacystis nidulans R2</name>
    <dbReference type="NCBI Taxonomy" id="1140"/>
    <lineage>
        <taxon>Bacteria</taxon>
        <taxon>Bacillati</taxon>
        <taxon>Cyanobacteriota</taxon>
        <taxon>Cyanophyceae</taxon>
        <taxon>Synechococcales</taxon>
        <taxon>Synechococcaceae</taxon>
        <taxon>Synechococcus</taxon>
    </lineage>
</organism>
<gene>
    <name evidence="1" type="primary">aspS</name>
    <name type="ordered locus">Synpcc7942_1313</name>
</gene>
<feature type="chain" id="PRO_0000235570" description="Aspartate--tRNA(Asp/Asn) ligase">
    <location>
        <begin position="1"/>
        <end position="599"/>
    </location>
</feature>
<feature type="region of interest" description="Aspartate" evidence="1">
    <location>
        <begin position="202"/>
        <end position="205"/>
    </location>
</feature>
<feature type="binding site" evidence="1">
    <location>
        <position position="178"/>
    </location>
    <ligand>
        <name>L-aspartate</name>
        <dbReference type="ChEBI" id="CHEBI:29991"/>
    </ligand>
</feature>
<feature type="binding site" evidence="1">
    <location>
        <begin position="224"/>
        <end position="226"/>
    </location>
    <ligand>
        <name>ATP</name>
        <dbReference type="ChEBI" id="CHEBI:30616"/>
    </ligand>
</feature>
<feature type="binding site" evidence="1">
    <location>
        <position position="224"/>
    </location>
    <ligand>
        <name>L-aspartate</name>
        <dbReference type="ChEBI" id="CHEBI:29991"/>
    </ligand>
</feature>
<feature type="binding site" evidence="1">
    <location>
        <position position="233"/>
    </location>
    <ligand>
        <name>ATP</name>
        <dbReference type="ChEBI" id="CHEBI:30616"/>
    </ligand>
</feature>
<feature type="binding site" evidence="1">
    <location>
        <position position="458"/>
    </location>
    <ligand>
        <name>L-aspartate</name>
        <dbReference type="ChEBI" id="CHEBI:29991"/>
    </ligand>
</feature>
<feature type="binding site" evidence="1">
    <location>
        <position position="488"/>
    </location>
    <ligand>
        <name>ATP</name>
        <dbReference type="ChEBI" id="CHEBI:30616"/>
    </ligand>
</feature>
<feature type="binding site" evidence="1">
    <location>
        <position position="495"/>
    </location>
    <ligand>
        <name>L-aspartate</name>
        <dbReference type="ChEBI" id="CHEBI:29991"/>
    </ligand>
</feature>
<feature type="binding site" evidence="1">
    <location>
        <begin position="540"/>
        <end position="543"/>
    </location>
    <ligand>
        <name>ATP</name>
        <dbReference type="ChEBI" id="CHEBI:30616"/>
    </ligand>
</feature>
<feature type="site" description="Important for tRNA non-discrimination" evidence="1">
    <location>
        <position position="30"/>
    </location>
</feature>